<organism>
    <name type="scientific">Uncinocarpus reesii (strain UAMH 1704)</name>
    <dbReference type="NCBI Taxonomy" id="336963"/>
    <lineage>
        <taxon>Eukaryota</taxon>
        <taxon>Fungi</taxon>
        <taxon>Dikarya</taxon>
        <taxon>Ascomycota</taxon>
        <taxon>Pezizomycotina</taxon>
        <taxon>Eurotiomycetes</taxon>
        <taxon>Eurotiomycetidae</taxon>
        <taxon>Onygenales</taxon>
        <taxon>Onygenaceae</taxon>
        <taxon>Uncinocarpus</taxon>
    </lineage>
</organism>
<proteinExistence type="inferred from homology"/>
<evidence type="ECO:0000250" key="1"/>
<evidence type="ECO:0000255" key="2"/>
<evidence type="ECO:0000255" key="3">
    <source>
        <dbReference type="PROSITE-ProRule" id="PRU10073"/>
    </source>
</evidence>
<evidence type="ECO:0000256" key="4">
    <source>
        <dbReference type="SAM" id="MobiDB-lite"/>
    </source>
</evidence>
<evidence type="ECO:0000305" key="5"/>
<dbReference type="EC" id="3.4.13.19" evidence="3"/>
<dbReference type="EMBL" id="CH476616">
    <property type="protein sequence ID" value="EEP78536.1"/>
    <property type="molecule type" value="Genomic_DNA"/>
</dbReference>
<dbReference type="RefSeq" id="XP_002543865.1">
    <property type="nucleotide sequence ID" value="XM_002543819.1"/>
</dbReference>
<dbReference type="SMR" id="C4JQN7"/>
<dbReference type="GeneID" id="8440221"/>
<dbReference type="KEGG" id="ure:UREG_03382"/>
<dbReference type="VEuPathDB" id="FungiDB:UREG_03382"/>
<dbReference type="eggNOG" id="KOG4127">
    <property type="taxonomic scope" value="Eukaryota"/>
</dbReference>
<dbReference type="HOGENOM" id="CLU_031404_4_2_1"/>
<dbReference type="InParanoid" id="C4JQN7"/>
<dbReference type="OMA" id="HIWHVAQ"/>
<dbReference type="OrthoDB" id="445695at2759"/>
<dbReference type="Proteomes" id="UP000002058">
    <property type="component" value="Unassembled WGS sequence"/>
</dbReference>
<dbReference type="GO" id="GO:0016020">
    <property type="term" value="C:membrane"/>
    <property type="evidence" value="ECO:0007669"/>
    <property type="project" value="UniProtKB-SubCell"/>
</dbReference>
<dbReference type="GO" id="GO:0046872">
    <property type="term" value="F:metal ion binding"/>
    <property type="evidence" value="ECO:0007669"/>
    <property type="project" value="UniProtKB-KW"/>
</dbReference>
<dbReference type="GO" id="GO:0070573">
    <property type="term" value="F:metallodipeptidase activity"/>
    <property type="evidence" value="ECO:0007669"/>
    <property type="project" value="InterPro"/>
</dbReference>
<dbReference type="GO" id="GO:0006508">
    <property type="term" value="P:proteolysis"/>
    <property type="evidence" value="ECO:0007669"/>
    <property type="project" value="UniProtKB-KW"/>
</dbReference>
<dbReference type="CDD" id="cd01301">
    <property type="entry name" value="rDP_like"/>
    <property type="match status" value="1"/>
</dbReference>
<dbReference type="Gene3D" id="3.20.20.140">
    <property type="entry name" value="Metal-dependent hydrolases"/>
    <property type="match status" value="1"/>
</dbReference>
<dbReference type="InterPro" id="IPR032466">
    <property type="entry name" value="Metal_Hydrolase"/>
</dbReference>
<dbReference type="InterPro" id="IPR008257">
    <property type="entry name" value="Pept_M19"/>
</dbReference>
<dbReference type="PANTHER" id="PTHR10443:SF12">
    <property type="entry name" value="DIPEPTIDASE"/>
    <property type="match status" value="1"/>
</dbReference>
<dbReference type="PANTHER" id="PTHR10443">
    <property type="entry name" value="MICROSOMAL DIPEPTIDASE"/>
    <property type="match status" value="1"/>
</dbReference>
<dbReference type="Pfam" id="PF01244">
    <property type="entry name" value="Peptidase_M19"/>
    <property type="match status" value="1"/>
</dbReference>
<dbReference type="SUPFAM" id="SSF51556">
    <property type="entry name" value="Metallo-dependent hydrolases"/>
    <property type="match status" value="1"/>
</dbReference>
<dbReference type="PROSITE" id="PS51365">
    <property type="entry name" value="RENAL_DIPEPTIDASE_2"/>
    <property type="match status" value="1"/>
</dbReference>
<gene>
    <name type="ORF">UREG_03382</name>
</gene>
<reference key="1">
    <citation type="journal article" date="2009" name="Genome Res.">
        <title>Comparative genomic analyses of the human fungal pathogens Coccidioides and their relatives.</title>
        <authorList>
            <person name="Sharpton T.J."/>
            <person name="Stajich J.E."/>
            <person name="Rounsley S.D."/>
            <person name="Gardner M.J."/>
            <person name="Wortman J.R."/>
            <person name="Jordar V.S."/>
            <person name="Maiti R."/>
            <person name="Kodira C.D."/>
            <person name="Neafsey D.E."/>
            <person name="Zeng Q."/>
            <person name="Hung C.-Y."/>
            <person name="McMahan C."/>
            <person name="Muszewska A."/>
            <person name="Grynberg M."/>
            <person name="Mandel M.A."/>
            <person name="Kellner E.M."/>
            <person name="Barker B.M."/>
            <person name="Galgiani J.N."/>
            <person name="Orbach M.J."/>
            <person name="Kirkland T.N."/>
            <person name="Cole G.T."/>
            <person name="Henn M.R."/>
            <person name="Birren B.W."/>
            <person name="Taylor J.W."/>
        </authorList>
    </citation>
    <scope>NUCLEOTIDE SEQUENCE [LARGE SCALE GENOMIC DNA]</scope>
    <source>
        <strain>UAMH 1704</strain>
    </source>
</reference>
<feature type="chain" id="PRO_0000411220" description="Putative dipeptidase UREG_03382">
    <location>
        <begin position="1"/>
        <end position="453"/>
    </location>
</feature>
<feature type="transmembrane region" description="Helical" evidence="2">
    <location>
        <begin position="41"/>
        <end position="63"/>
    </location>
</feature>
<feature type="region of interest" description="Disordered" evidence="4">
    <location>
        <begin position="1"/>
        <end position="33"/>
    </location>
</feature>
<feature type="binding site" evidence="3">
    <location>
        <position position="95"/>
    </location>
    <ligand>
        <name>Zn(2+)</name>
        <dbReference type="ChEBI" id="CHEBI:29105"/>
        <label>1</label>
        <note>catalytic</note>
    </ligand>
</feature>
<feature type="binding site" evidence="3">
    <location>
        <position position="97"/>
    </location>
    <ligand>
        <name>Zn(2+)</name>
        <dbReference type="ChEBI" id="CHEBI:29105"/>
        <label>1</label>
        <note>catalytic</note>
    </ligand>
</feature>
<feature type="binding site" evidence="3">
    <location>
        <position position="208"/>
    </location>
    <ligand>
        <name>Zn(2+)</name>
        <dbReference type="ChEBI" id="CHEBI:29105"/>
        <label>1</label>
        <note>catalytic</note>
    </ligand>
</feature>
<feature type="binding site" evidence="3">
    <location>
        <position position="208"/>
    </location>
    <ligand>
        <name>Zn(2+)</name>
        <dbReference type="ChEBI" id="CHEBI:29105"/>
        <label>2</label>
        <note>catalytic</note>
    </ligand>
</feature>
<feature type="binding site" evidence="3">
    <location>
        <position position="221"/>
    </location>
    <ligand>
        <name>substrate</name>
    </ligand>
</feature>
<feature type="binding site" evidence="3">
    <location>
        <position position="265"/>
    </location>
    <ligand>
        <name>Zn(2+)</name>
        <dbReference type="ChEBI" id="CHEBI:29105"/>
        <label>2</label>
        <note>catalytic</note>
    </ligand>
</feature>
<feature type="binding site" evidence="3">
    <location>
        <position position="286"/>
    </location>
    <ligand>
        <name>Zn(2+)</name>
        <dbReference type="ChEBI" id="CHEBI:29105"/>
        <label>2</label>
        <note>catalytic</note>
    </ligand>
</feature>
<feature type="binding site" evidence="3">
    <location>
        <position position="297"/>
    </location>
    <ligand>
        <name>substrate</name>
    </ligand>
</feature>
<feature type="binding site" evidence="3">
    <location>
        <position position="357"/>
    </location>
    <ligand>
        <name>substrate</name>
    </ligand>
</feature>
<feature type="glycosylation site" description="N-linked (GlcNAc...) asparagine" evidence="2">
    <location>
        <position position="370"/>
    </location>
</feature>
<feature type="glycosylation site" description="N-linked (GlcNAc...) asparagine" evidence="2">
    <location>
        <position position="443"/>
    </location>
</feature>
<feature type="disulfide bond" evidence="3">
    <location>
        <begin position="147"/>
        <end position="223"/>
    </location>
</feature>
<name>DPEP2_UNCRE</name>
<sequence length="453" mass="50043">MSTRDHVKQSPMPVQEGYPRSSKEFSPPSSRSRKRTWVRNLTMSLLIAAGAATFSKYIFPLGSILGAGSLQPIDPHDYAARADRILSTTPLIDGHNDLPYLIRLETKNKIYDHEKLPFEAGLLSHTDAKKIRQGKLGGQFWSVYVECPADPSAGIDDPSWAVRDTLEQIDVAKRLVDEYPDLLEYCETASCARSAFKKGRVGSFLGIEVHDLGVRYITVTHNCDNAFATAASTVAAGKPDHGLTDFGREFVKEMNRLGMLIDLSHVSHQTMRDVLSVTNAPVIFSHSSSYALSKHLRNVPDDVLRTVTKNGGVVMVTFVPLFLKVNDPASVTIHDAVDHILHVAKVAGWDHVGIGSDFDGTAVVPKGLENVSKYPRLVELLLERGVTDEQARKLVGENLLRVWSKAEDIAYAIQASGQKPNEETWSGRKWTAAADIPMPSMFNDSAERRKQLE</sequence>
<accession>C4JQN7</accession>
<comment type="function">
    <text evidence="1">Hydrolyzes a wide range of dipeptides.</text>
</comment>
<comment type="catalytic activity">
    <reaction evidence="3">
        <text>an L-aminoacyl-L-amino acid + H2O = 2 an L-alpha-amino acid</text>
        <dbReference type="Rhea" id="RHEA:48940"/>
        <dbReference type="ChEBI" id="CHEBI:15377"/>
        <dbReference type="ChEBI" id="CHEBI:59869"/>
        <dbReference type="ChEBI" id="CHEBI:77460"/>
        <dbReference type="EC" id="3.4.13.19"/>
    </reaction>
</comment>
<comment type="cofactor">
    <cofactor evidence="3">
        <name>Zn(2+)</name>
        <dbReference type="ChEBI" id="CHEBI:29105"/>
    </cofactor>
</comment>
<comment type="subcellular location">
    <subcellularLocation>
        <location evidence="5">Membrane</location>
        <topology evidence="5">Single-pass membrane protein</topology>
    </subcellularLocation>
</comment>
<comment type="similarity">
    <text evidence="3">Belongs to the metallo-dependent hydrolases superfamily. Peptidase M19 family.</text>
</comment>
<keyword id="KW-0224">Dipeptidase</keyword>
<keyword id="KW-1015">Disulfide bond</keyword>
<keyword id="KW-0325">Glycoprotein</keyword>
<keyword id="KW-0378">Hydrolase</keyword>
<keyword id="KW-0472">Membrane</keyword>
<keyword id="KW-0479">Metal-binding</keyword>
<keyword id="KW-0482">Metalloprotease</keyword>
<keyword id="KW-0645">Protease</keyword>
<keyword id="KW-1185">Reference proteome</keyword>
<keyword id="KW-0812">Transmembrane</keyword>
<keyword id="KW-1133">Transmembrane helix</keyword>
<keyword id="KW-0862">Zinc</keyword>
<protein>
    <recommendedName>
        <fullName>Putative dipeptidase UREG_03382</fullName>
        <ecNumber evidence="3">3.4.13.19</ecNumber>
    </recommendedName>
</protein>